<comment type="function">
    <text evidence="1">Probable helicase, member of the UBC2/RAD6 epistasis group. Functions with DNA repair protein RAD18 in error-free postreplication DNA repair. Involved in the maintenance of wild-type rates of instability of simple repetitive sequences such as poly(GT) repeats. Seems to be involved in maintaining a balance which acts in favor of error-prone non-homologous joining during DNA double-strand breaks repairs (By similarity).</text>
</comment>
<comment type="subcellular location">
    <subcellularLocation>
        <location evidence="1">Cytoplasm</location>
    </subcellularLocation>
    <subcellularLocation>
        <location evidence="1">Nucleus</location>
    </subcellularLocation>
</comment>
<comment type="similarity">
    <text evidence="6">Belongs to the SNF2/RAD54 helicase family.</text>
</comment>
<feature type="chain" id="PRO_0000056121" description="DNA repair protein RAD5">
    <location>
        <begin position="1"/>
        <end position="1198"/>
    </location>
</feature>
<feature type="domain" description="Helicase ATP-binding" evidence="3">
    <location>
        <begin position="509"/>
        <end position="737"/>
    </location>
</feature>
<feature type="domain" description="Helicase C-terminal" evidence="4">
    <location>
        <begin position="1021"/>
        <end position="1180"/>
    </location>
</feature>
<feature type="zinc finger region" description="RING-type" evidence="2">
    <location>
        <begin position="920"/>
        <end position="964"/>
    </location>
</feature>
<feature type="region of interest" description="Disordered" evidence="5">
    <location>
        <begin position="1"/>
        <end position="129"/>
    </location>
</feature>
<feature type="region of interest" description="Disordered" evidence="5">
    <location>
        <begin position="348"/>
        <end position="401"/>
    </location>
</feature>
<feature type="region of interest" description="Disordered" evidence="5">
    <location>
        <begin position="541"/>
        <end position="564"/>
    </location>
</feature>
<feature type="short sequence motif" description="DEAH box">
    <location>
        <begin position="688"/>
        <end position="691"/>
    </location>
</feature>
<feature type="compositionally biased region" description="Low complexity" evidence="5">
    <location>
        <begin position="45"/>
        <end position="58"/>
    </location>
</feature>
<feature type="compositionally biased region" description="Basic residues" evidence="5">
    <location>
        <begin position="104"/>
        <end position="117"/>
    </location>
</feature>
<feature type="compositionally biased region" description="Low complexity" evidence="5">
    <location>
        <begin position="118"/>
        <end position="129"/>
    </location>
</feature>
<feature type="compositionally biased region" description="Acidic residues" evidence="5">
    <location>
        <begin position="386"/>
        <end position="395"/>
    </location>
</feature>
<feature type="binding site" evidence="3">
    <location>
        <begin position="522"/>
        <end position="529"/>
    </location>
    <ligand>
        <name>ATP</name>
        <dbReference type="ChEBI" id="CHEBI:30616"/>
    </ligand>
</feature>
<evidence type="ECO:0000250" key="1"/>
<evidence type="ECO:0000255" key="2">
    <source>
        <dbReference type="PROSITE-ProRule" id="PRU00175"/>
    </source>
</evidence>
<evidence type="ECO:0000255" key="3">
    <source>
        <dbReference type="PROSITE-ProRule" id="PRU00541"/>
    </source>
</evidence>
<evidence type="ECO:0000255" key="4">
    <source>
        <dbReference type="PROSITE-ProRule" id="PRU00542"/>
    </source>
</evidence>
<evidence type="ECO:0000256" key="5">
    <source>
        <dbReference type="SAM" id="MobiDB-lite"/>
    </source>
</evidence>
<evidence type="ECO:0000305" key="6"/>
<protein>
    <recommendedName>
        <fullName>DNA repair protein RAD5</fullName>
        <ecNumber>3.6.4.-</ecNumber>
    </recommendedName>
</protein>
<keyword id="KW-0067">ATP-binding</keyword>
<keyword id="KW-0963">Cytoplasm</keyword>
<keyword id="KW-0227">DNA damage</keyword>
<keyword id="KW-0234">DNA repair</keyword>
<keyword id="KW-0238">DNA-binding</keyword>
<keyword id="KW-0347">Helicase</keyword>
<keyword id="KW-0378">Hydrolase</keyword>
<keyword id="KW-0479">Metal-binding</keyword>
<keyword id="KW-0547">Nucleotide-binding</keyword>
<keyword id="KW-0539">Nucleus</keyword>
<keyword id="KW-1185">Reference proteome</keyword>
<keyword id="KW-0862">Zinc</keyword>
<keyword id="KW-0863">Zinc-finger</keyword>
<gene>
    <name type="primary">RAD5</name>
    <name type="ordered locus">CNA02850</name>
</gene>
<reference key="1">
    <citation type="journal article" date="2005" name="Science">
        <title>The genome of the basidiomycetous yeast and human pathogen Cryptococcus neoformans.</title>
        <authorList>
            <person name="Loftus B.J."/>
            <person name="Fung E."/>
            <person name="Roncaglia P."/>
            <person name="Rowley D."/>
            <person name="Amedeo P."/>
            <person name="Bruno D."/>
            <person name="Vamathevan J."/>
            <person name="Miranda M."/>
            <person name="Anderson I.J."/>
            <person name="Fraser J.A."/>
            <person name="Allen J.E."/>
            <person name="Bosdet I.E."/>
            <person name="Brent M.R."/>
            <person name="Chiu R."/>
            <person name="Doering T.L."/>
            <person name="Donlin M.J."/>
            <person name="D'Souza C.A."/>
            <person name="Fox D.S."/>
            <person name="Grinberg V."/>
            <person name="Fu J."/>
            <person name="Fukushima M."/>
            <person name="Haas B.J."/>
            <person name="Huang J.C."/>
            <person name="Janbon G."/>
            <person name="Jones S.J.M."/>
            <person name="Koo H.L."/>
            <person name="Krzywinski M.I."/>
            <person name="Kwon-Chung K.J."/>
            <person name="Lengeler K.B."/>
            <person name="Maiti R."/>
            <person name="Marra M.A."/>
            <person name="Marra R.E."/>
            <person name="Mathewson C.A."/>
            <person name="Mitchell T.G."/>
            <person name="Pertea M."/>
            <person name="Riggs F.R."/>
            <person name="Salzberg S.L."/>
            <person name="Schein J.E."/>
            <person name="Shvartsbeyn A."/>
            <person name="Shin H."/>
            <person name="Shumway M."/>
            <person name="Specht C.A."/>
            <person name="Suh B.B."/>
            <person name="Tenney A."/>
            <person name="Utterback T.R."/>
            <person name="Wickes B.L."/>
            <person name="Wortman J.R."/>
            <person name="Wye N.H."/>
            <person name="Kronstad J.W."/>
            <person name="Lodge J.K."/>
            <person name="Heitman J."/>
            <person name="Davis R.W."/>
            <person name="Fraser C.M."/>
            <person name="Hyman R.W."/>
        </authorList>
    </citation>
    <scope>NUCLEOTIDE SEQUENCE [LARGE SCALE GENOMIC DNA]</scope>
    <source>
        <strain>JEC21 / ATCC MYA-565</strain>
    </source>
</reference>
<name>RAD5_CRYNJ</name>
<dbReference type="EC" id="3.6.4.-"/>
<dbReference type="EMBL" id="AE017341">
    <property type="protein sequence ID" value="AAW40874.1"/>
    <property type="molecule type" value="Genomic_DNA"/>
</dbReference>
<dbReference type="RefSeq" id="XP_566693.1">
    <property type="nucleotide sequence ID" value="XM_566693.1"/>
</dbReference>
<dbReference type="SMR" id="P0CQ66"/>
<dbReference type="FunCoup" id="P0CQ66">
    <property type="interactions" value="225"/>
</dbReference>
<dbReference type="STRING" id="214684.P0CQ66"/>
<dbReference type="PaxDb" id="214684-P0CQ66"/>
<dbReference type="EnsemblFungi" id="AAW40874">
    <property type="protein sequence ID" value="AAW40874"/>
    <property type="gene ID" value="CNA02850"/>
</dbReference>
<dbReference type="GeneID" id="3253723"/>
<dbReference type="KEGG" id="cne:CNA02850"/>
<dbReference type="VEuPathDB" id="FungiDB:CNA02850"/>
<dbReference type="eggNOG" id="KOG1001">
    <property type="taxonomic scope" value="Eukaryota"/>
</dbReference>
<dbReference type="HOGENOM" id="CLU_000315_2_5_1"/>
<dbReference type="InParanoid" id="P0CQ66"/>
<dbReference type="OMA" id="KVEPWSN"/>
<dbReference type="OrthoDB" id="448448at2759"/>
<dbReference type="Proteomes" id="UP000002149">
    <property type="component" value="Chromosome 1"/>
</dbReference>
<dbReference type="GO" id="GO:0005737">
    <property type="term" value="C:cytoplasm"/>
    <property type="evidence" value="ECO:0007669"/>
    <property type="project" value="UniProtKB-SubCell"/>
</dbReference>
<dbReference type="GO" id="GO:0005634">
    <property type="term" value="C:nucleus"/>
    <property type="evidence" value="ECO:0000318"/>
    <property type="project" value="GO_Central"/>
</dbReference>
<dbReference type="GO" id="GO:0005524">
    <property type="term" value="F:ATP binding"/>
    <property type="evidence" value="ECO:0007669"/>
    <property type="project" value="UniProtKB-KW"/>
</dbReference>
<dbReference type="GO" id="GO:0008094">
    <property type="term" value="F:ATP-dependent activity, acting on DNA"/>
    <property type="evidence" value="ECO:0000318"/>
    <property type="project" value="GO_Central"/>
</dbReference>
<dbReference type="GO" id="GO:0003677">
    <property type="term" value="F:DNA binding"/>
    <property type="evidence" value="ECO:0007669"/>
    <property type="project" value="UniProtKB-KW"/>
</dbReference>
<dbReference type="GO" id="GO:0004386">
    <property type="term" value="F:helicase activity"/>
    <property type="evidence" value="ECO:0007669"/>
    <property type="project" value="UniProtKB-KW"/>
</dbReference>
<dbReference type="GO" id="GO:0016818">
    <property type="term" value="F:hydrolase activity, acting on acid anhydrides, in phosphorus-containing anhydrides"/>
    <property type="evidence" value="ECO:0007669"/>
    <property type="project" value="InterPro"/>
</dbReference>
<dbReference type="GO" id="GO:0008270">
    <property type="term" value="F:zinc ion binding"/>
    <property type="evidence" value="ECO:0007669"/>
    <property type="project" value="UniProtKB-KW"/>
</dbReference>
<dbReference type="GO" id="GO:0006281">
    <property type="term" value="P:DNA repair"/>
    <property type="evidence" value="ECO:0000318"/>
    <property type="project" value="GO_Central"/>
</dbReference>
<dbReference type="CDD" id="cd18008">
    <property type="entry name" value="DEXDc_SHPRH-like"/>
    <property type="match status" value="1"/>
</dbReference>
<dbReference type="CDD" id="cd18793">
    <property type="entry name" value="SF2_C_SNF"/>
    <property type="match status" value="1"/>
</dbReference>
<dbReference type="Gene3D" id="3.40.50.300">
    <property type="entry name" value="P-loop containing nucleotide triphosphate hydrolases"/>
    <property type="match status" value="1"/>
</dbReference>
<dbReference type="Gene3D" id="3.40.50.10810">
    <property type="entry name" value="Tandem AAA-ATPase domain"/>
    <property type="match status" value="1"/>
</dbReference>
<dbReference type="Gene3D" id="3.30.40.10">
    <property type="entry name" value="Zinc/RING finger domain, C3HC4 (zinc finger)"/>
    <property type="match status" value="1"/>
</dbReference>
<dbReference type="InterPro" id="IPR014001">
    <property type="entry name" value="Helicase_ATP-bd"/>
</dbReference>
<dbReference type="InterPro" id="IPR001650">
    <property type="entry name" value="Helicase_C-like"/>
</dbReference>
<dbReference type="InterPro" id="IPR014905">
    <property type="entry name" value="HIRAN"/>
</dbReference>
<dbReference type="InterPro" id="IPR027417">
    <property type="entry name" value="P-loop_NTPase"/>
</dbReference>
<dbReference type="InterPro" id="IPR038718">
    <property type="entry name" value="SNF2-like_sf"/>
</dbReference>
<dbReference type="InterPro" id="IPR049730">
    <property type="entry name" value="SNF2/RAD54-like_C"/>
</dbReference>
<dbReference type="InterPro" id="IPR000330">
    <property type="entry name" value="SNF2_N"/>
</dbReference>
<dbReference type="InterPro" id="IPR050628">
    <property type="entry name" value="SNF2_RAD54_helicase_TF"/>
</dbReference>
<dbReference type="InterPro" id="IPR018957">
    <property type="entry name" value="Znf_C3HC4_RING-type"/>
</dbReference>
<dbReference type="InterPro" id="IPR001841">
    <property type="entry name" value="Znf_RING"/>
</dbReference>
<dbReference type="InterPro" id="IPR013083">
    <property type="entry name" value="Znf_RING/FYVE/PHD"/>
</dbReference>
<dbReference type="PANTHER" id="PTHR45626:SF22">
    <property type="entry name" value="DNA REPAIR PROTEIN RAD5"/>
    <property type="match status" value="1"/>
</dbReference>
<dbReference type="PANTHER" id="PTHR45626">
    <property type="entry name" value="TRANSCRIPTION TERMINATION FACTOR 2-RELATED"/>
    <property type="match status" value="1"/>
</dbReference>
<dbReference type="Pfam" id="PF00271">
    <property type="entry name" value="Helicase_C"/>
    <property type="match status" value="1"/>
</dbReference>
<dbReference type="Pfam" id="PF08797">
    <property type="entry name" value="HIRAN"/>
    <property type="match status" value="1"/>
</dbReference>
<dbReference type="Pfam" id="PF00176">
    <property type="entry name" value="SNF2-rel_dom"/>
    <property type="match status" value="1"/>
</dbReference>
<dbReference type="Pfam" id="PF00097">
    <property type="entry name" value="zf-C3HC4"/>
    <property type="match status" value="1"/>
</dbReference>
<dbReference type="SMART" id="SM00487">
    <property type="entry name" value="DEXDc"/>
    <property type="match status" value="1"/>
</dbReference>
<dbReference type="SMART" id="SM00490">
    <property type="entry name" value="HELICc"/>
    <property type="match status" value="1"/>
</dbReference>
<dbReference type="SMART" id="SM00910">
    <property type="entry name" value="HIRAN"/>
    <property type="match status" value="1"/>
</dbReference>
<dbReference type="SUPFAM" id="SSF52540">
    <property type="entry name" value="P-loop containing nucleoside triphosphate hydrolases"/>
    <property type="match status" value="2"/>
</dbReference>
<dbReference type="SUPFAM" id="SSF57850">
    <property type="entry name" value="RING/U-box"/>
    <property type="match status" value="1"/>
</dbReference>
<dbReference type="PROSITE" id="PS51192">
    <property type="entry name" value="HELICASE_ATP_BIND_1"/>
    <property type="match status" value="1"/>
</dbReference>
<dbReference type="PROSITE" id="PS51194">
    <property type="entry name" value="HELICASE_CTER"/>
    <property type="match status" value="1"/>
</dbReference>
<dbReference type="PROSITE" id="PS50089">
    <property type="entry name" value="ZF_RING_2"/>
    <property type="match status" value="1"/>
</dbReference>
<sequence length="1198" mass="134261">MSAEASPETGRFRTKSSPELFFPATDSEGEEQNDVPLTIVHPTQSTSSKFSINIASSSRPQHGITTGDFEATSQTSAHDNVDDDFSIVGHNPASSHPQGTIVAPRRKRSLQQAHSHHSSSSSSPVPSAPVIRADFRKGFLGEFVCEGWSLSKGRGYCSPGTKIVIERPKSKSTDVGAPKPGRKDSGPVRLVNGKVVGGVKSKQMTLGSMMAKKVEPAKKVKATTDQIIRFRNERGFEIGRLSIHEAGFLAHLLDTGVIQLSGNVIDCPQNLTTGCTILLNIKVYLARKAFENFGKHKREEHFSFWKDQRETAMEEAMRLRKDSLRSLFERIGVKPIQSSALSKVTPIQGVLNRQKGPDLEGSRLRSSPSTSTAEEKGKGRAAMPAVDDDGEDSGDEAEKLDEKQMNEIDSIYRKAQQGDTRLDEMDPPSTFLYTLRPYQKQALTWMNAREKGDSSVRNESLHPLWEEYLFKKDQLPGEPIEISDDDEQPDSTRKFYWNPYSGELSLKFPTSQNLSRGGILADAMGMGKTCMMASLIHTNREEKPAGNLESQTRDGVEGEIDEEPASKRIKFKQVTLSNQWRAVPTAPKVESFPRATLVVCPVSLAAQWHDELRKMSQQGSINSYVWYGGDRVDIEALLAGDGKERVDVIVTSYGTLTSEYQKWLRTKDRPNYEGGSLYDHEFLRIVLDEAHNIRNRLAMVSKACYELKGQRRWALTGTPIVNRLEDLYSLLHFLRITPWGNYSFFRSFVTVPFLNQDHKALNVVQYILESCLLRREKTMRDKDGRLIVDLPPKTVEIKVLQFSRAERQIYKFLEERAKKRFIDLDADGRAMSNYTSILAMLMKLRQCVDHPLLVLGKSGEDGELGEKILESGAGNGEGNLRDMIAMYAGGIRAETPEDVDKAYAAKVLKELGEQEDTPICELCSNEMFDEVLLPCYHRSCQDCIVEWIGTCEDQNKIASCPSCGKGPIKLADLRSVQRRHKRVNPITDAYPGGRDPNLKSSNDTTVTLGKVDLVTSTKLRALLRQLEEIRQEDPKAKALVFSQFTSFLDLIEATLTKQGIRWLRFDGTMSQAQRANTIEEFGRKTNEPLILLISLKAGGVGLNLTMANYVFLMDTWWNEAIEQQAIDRVHRLGQNKPVYVTRYIIKGTVEKRIMKIQRSKTALVNASLSNGAKTKETTLADIKKIFGMDEEDSEGEVY</sequence>
<organism>
    <name type="scientific">Cryptococcus neoformans var. neoformans serotype D (strain JEC21 / ATCC MYA-565)</name>
    <name type="common">Filobasidiella neoformans</name>
    <dbReference type="NCBI Taxonomy" id="214684"/>
    <lineage>
        <taxon>Eukaryota</taxon>
        <taxon>Fungi</taxon>
        <taxon>Dikarya</taxon>
        <taxon>Basidiomycota</taxon>
        <taxon>Agaricomycotina</taxon>
        <taxon>Tremellomycetes</taxon>
        <taxon>Tremellales</taxon>
        <taxon>Cryptococcaceae</taxon>
        <taxon>Cryptococcus</taxon>
        <taxon>Cryptococcus neoformans species complex</taxon>
    </lineage>
</organism>
<proteinExistence type="inferred from homology"/>
<accession>P0CQ66</accession>
<accession>Q560G8</accession>
<accession>Q5KPG8</accession>